<gene>
    <name evidence="1" type="primary">accD</name>
    <name type="ordered locus">XOO3078</name>
</gene>
<sequence>MSWLSKLMPSGIRTENTPAKKRSVPEGLWEKCSNCGSALYGPELEENLEVCPKCDHHMAIRARARLNSLFDPDTATTEIAAQLGPVDVLKFKDQKRYGERIKASQKASGEYDALIAMRGTLKGNPLVAAAFDFAFMGGSMGSVVGERFARAAEVALEVGCPFVCFSASGGARMQEGLFSLMQMAKTSAALGRLREAGLPYISVLTHPTTGGVSASFAMLGDINIAEPHALIGFAGPRVIEQTVRETLPEGFQRSEFLLDHGAIDQICDRREMRNRIAELTAMMMRQPHPQDADAA</sequence>
<accession>Q2P0U4</accession>
<name>ACCD_XANOM</name>
<keyword id="KW-0067">ATP-binding</keyword>
<keyword id="KW-0963">Cytoplasm</keyword>
<keyword id="KW-0275">Fatty acid biosynthesis</keyword>
<keyword id="KW-0276">Fatty acid metabolism</keyword>
<keyword id="KW-0444">Lipid biosynthesis</keyword>
<keyword id="KW-0443">Lipid metabolism</keyword>
<keyword id="KW-0479">Metal-binding</keyword>
<keyword id="KW-0547">Nucleotide-binding</keyword>
<keyword id="KW-0808">Transferase</keyword>
<keyword id="KW-0862">Zinc</keyword>
<keyword id="KW-0863">Zinc-finger</keyword>
<evidence type="ECO:0000255" key="1">
    <source>
        <dbReference type="HAMAP-Rule" id="MF_01395"/>
    </source>
</evidence>
<evidence type="ECO:0000255" key="2">
    <source>
        <dbReference type="PROSITE-ProRule" id="PRU01136"/>
    </source>
</evidence>
<evidence type="ECO:0000256" key="3">
    <source>
        <dbReference type="SAM" id="MobiDB-lite"/>
    </source>
</evidence>
<proteinExistence type="inferred from homology"/>
<protein>
    <recommendedName>
        <fullName evidence="1">Acetyl-coenzyme A carboxylase carboxyl transferase subunit beta</fullName>
        <shortName evidence="1">ACCase subunit beta</shortName>
        <shortName evidence="1">Acetyl-CoA carboxylase carboxyltransferase subunit beta</shortName>
        <ecNumber evidence="1">2.1.3.15</ecNumber>
    </recommendedName>
</protein>
<organism>
    <name type="scientific">Xanthomonas oryzae pv. oryzae (strain MAFF 311018)</name>
    <dbReference type="NCBI Taxonomy" id="342109"/>
    <lineage>
        <taxon>Bacteria</taxon>
        <taxon>Pseudomonadati</taxon>
        <taxon>Pseudomonadota</taxon>
        <taxon>Gammaproteobacteria</taxon>
        <taxon>Lysobacterales</taxon>
        <taxon>Lysobacteraceae</taxon>
        <taxon>Xanthomonas</taxon>
    </lineage>
</organism>
<comment type="function">
    <text evidence="1">Component of the acetyl coenzyme A carboxylase (ACC) complex. Biotin carboxylase (BC) catalyzes the carboxylation of biotin on its carrier protein (BCCP) and then the CO(2) group is transferred by the transcarboxylase to acetyl-CoA to form malonyl-CoA.</text>
</comment>
<comment type="catalytic activity">
    <reaction evidence="1">
        <text>N(6)-carboxybiotinyl-L-lysyl-[protein] + acetyl-CoA = N(6)-biotinyl-L-lysyl-[protein] + malonyl-CoA</text>
        <dbReference type="Rhea" id="RHEA:54728"/>
        <dbReference type="Rhea" id="RHEA-COMP:10505"/>
        <dbReference type="Rhea" id="RHEA-COMP:10506"/>
        <dbReference type="ChEBI" id="CHEBI:57288"/>
        <dbReference type="ChEBI" id="CHEBI:57384"/>
        <dbReference type="ChEBI" id="CHEBI:83144"/>
        <dbReference type="ChEBI" id="CHEBI:83145"/>
        <dbReference type="EC" id="2.1.3.15"/>
    </reaction>
</comment>
<comment type="cofactor">
    <cofactor evidence="1">
        <name>Zn(2+)</name>
        <dbReference type="ChEBI" id="CHEBI:29105"/>
    </cofactor>
    <text evidence="1">Binds 1 zinc ion per subunit.</text>
</comment>
<comment type="pathway">
    <text evidence="1">Lipid metabolism; malonyl-CoA biosynthesis; malonyl-CoA from acetyl-CoA: step 1/1.</text>
</comment>
<comment type="subunit">
    <text evidence="1">Acetyl-CoA carboxylase is a heterohexamer composed of biotin carboxyl carrier protein (AccB), biotin carboxylase (AccC) and two subunits each of ACCase subunit alpha (AccA) and ACCase subunit beta (AccD).</text>
</comment>
<comment type="subcellular location">
    <subcellularLocation>
        <location evidence="1">Cytoplasm</location>
    </subcellularLocation>
</comment>
<comment type="similarity">
    <text evidence="1">Belongs to the AccD/PCCB family.</text>
</comment>
<dbReference type="EC" id="2.1.3.15" evidence="1"/>
<dbReference type="EMBL" id="AP008229">
    <property type="protein sequence ID" value="BAE69833.1"/>
    <property type="molecule type" value="Genomic_DNA"/>
</dbReference>
<dbReference type="RefSeq" id="WP_011259760.1">
    <property type="nucleotide sequence ID" value="NC_007705.1"/>
</dbReference>
<dbReference type="SMR" id="Q2P0U4"/>
<dbReference type="GeneID" id="77336961"/>
<dbReference type="KEGG" id="xom:XOO3078"/>
<dbReference type="HOGENOM" id="CLU_015486_1_0_6"/>
<dbReference type="UniPathway" id="UPA00655">
    <property type="reaction ID" value="UER00711"/>
</dbReference>
<dbReference type="GO" id="GO:0009329">
    <property type="term" value="C:acetate CoA-transferase complex"/>
    <property type="evidence" value="ECO:0007669"/>
    <property type="project" value="TreeGrafter"/>
</dbReference>
<dbReference type="GO" id="GO:0003989">
    <property type="term" value="F:acetyl-CoA carboxylase activity"/>
    <property type="evidence" value="ECO:0007669"/>
    <property type="project" value="InterPro"/>
</dbReference>
<dbReference type="GO" id="GO:0005524">
    <property type="term" value="F:ATP binding"/>
    <property type="evidence" value="ECO:0007669"/>
    <property type="project" value="UniProtKB-KW"/>
</dbReference>
<dbReference type="GO" id="GO:0016743">
    <property type="term" value="F:carboxyl- or carbamoyltransferase activity"/>
    <property type="evidence" value="ECO:0007669"/>
    <property type="project" value="UniProtKB-UniRule"/>
</dbReference>
<dbReference type="GO" id="GO:0008270">
    <property type="term" value="F:zinc ion binding"/>
    <property type="evidence" value="ECO:0007669"/>
    <property type="project" value="UniProtKB-UniRule"/>
</dbReference>
<dbReference type="GO" id="GO:0006633">
    <property type="term" value="P:fatty acid biosynthetic process"/>
    <property type="evidence" value="ECO:0007669"/>
    <property type="project" value="UniProtKB-KW"/>
</dbReference>
<dbReference type="GO" id="GO:2001295">
    <property type="term" value="P:malonyl-CoA biosynthetic process"/>
    <property type="evidence" value="ECO:0007669"/>
    <property type="project" value="UniProtKB-UniRule"/>
</dbReference>
<dbReference type="Gene3D" id="3.90.226.10">
    <property type="entry name" value="2-enoyl-CoA Hydratase, Chain A, domain 1"/>
    <property type="match status" value="1"/>
</dbReference>
<dbReference type="HAMAP" id="MF_01395">
    <property type="entry name" value="AcetylCoA_CT_beta"/>
    <property type="match status" value="1"/>
</dbReference>
<dbReference type="InterPro" id="IPR034733">
    <property type="entry name" value="AcCoA_carboxyl_beta"/>
</dbReference>
<dbReference type="InterPro" id="IPR000438">
    <property type="entry name" value="Acetyl_CoA_COase_Trfase_b_su"/>
</dbReference>
<dbReference type="InterPro" id="IPR029045">
    <property type="entry name" value="ClpP/crotonase-like_dom_sf"/>
</dbReference>
<dbReference type="InterPro" id="IPR011762">
    <property type="entry name" value="COA_CT_N"/>
</dbReference>
<dbReference type="InterPro" id="IPR041010">
    <property type="entry name" value="Znf-ACC"/>
</dbReference>
<dbReference type="NCBIfam" id="TIGR00515">
    <property type="entry name" value="accD"/>
    <property type="match status" value="1"/>
</dbReference>
<dbReference type="PANTHER" id="PTHR42995">
    <property type="entry name" value="ACETYL-COENZYME A CARBOXYLASE CARBOXYL TRANSFERASE SUBUNIT BETA, CHLOROPLASTIC"/>
    <property type="match status" value="1"/>
</dbReference>
<dbReference type="PANTHER" id="PTHR42995:SF5">
    <property type="entry name" value="ACETYL-COENZYME A CARBOXYLASE CARBOXYL TRANSFERASE SUBUNIT BETA, CHLOROPLASTIC"/>
    <property type="match status" value="1"/>
</dbReference>
<dbReference type="Pfam" id="PF01039">
    <property type="entry name" value="Carboxyl_trans"/>
    <property type="match status" value="1"/>
</dbReference>
<dbReference type="Pfam" id="PF17848">
    <property type="entry name" value="Zn_ribbon_ACC"/>
    <property type="match status" value="1"/>
</dbReference>
<dbReference type="PRINTS" id="PR01070">
    <property type="entry name" value="ACCCTRFRASEB"/>
</dbReference>
<dbReference type="SUPFAM" id="SSF52096">
    <property type="entry name" value="ClpP/crotonase"/>
    <property type="match status" value="1"/>
</dbReference>
<dbReference type="PROSITE" id="PS50980">
    <property type="entry name" value="COA_CT_NTER"/>
    <property type="match status" value="1"/>
</dbReference>
<feature type="chain" id="PRO_0000359101" description="Acetyl-coenzyme A carboxylase carboxyl transferase subunit beta">
    <location>
        <begin position="1"/>
        <end position="295"/>
    </location>
</feature>
<feature type="domain" description="CoA carboxyltransferase N-terminal" evidence="2">
    <location>
        <begin position="28"/>
        <end position="295"/>
    </location>
</feature>
<feature type="zinc finger region" description="C4-type" evidence="1">
    <location>
        <begin position="32"/>
        <end position="54"/>
    </location>
</feature>
<feature type="region of interest" description="Disordered" evidence="3">
    <location>
        <begin position="1"/>
        <end position="20"/>
    </location>
</feature>
<feature type="binding site" evidence="1">
    <location>
        <position position="32"/>
    </location>
    <ligand>
        <name>Zn(2+)</name>
        <dbReference type="ChEBI" id="CHEBI:29105"/>
    </ligand>
</feature>
<feature type="binding site" evidence="1">
    <location>
        <position position="35"/>
    </location>
    <ligand>
        <name>Zn(2+)</name>
        <dbReference type="ChEBI" id="CHEBI:29105"/>
    </ligand>
</feature>
<feature type="binding site" evidence="1">
    <location>
        <position position="51"/>
    </location>
    <ligand>
        <name>Zn(2+)</name>
        <dbReference type="ChEBI" id="CHEBI:29105"/>
    </ligand>
</feature>
<feature type="binding site" evidence="1">
    <location>
        <position position="54"/>
    </location>
    <ligand>
        <name>Zn(2+)</name>
        <dbReference type="ChEBI" id="CHEBI:29105"/>
    </ligand>
</feature>
<reference key="1">
    <citation type="journal article" date="2005" name="Jpn. Agric. Res. Q.">
        <title>Genome sequence of Xanthomonas oryzae pv. oryzae suggests contribution of large numbers of effector genes and insertion sequences to its race diversity.</title>
        <authorList>
            <person name="Ochiai H."/>
            <person name="Inoue Y."/>
            <person name="Takeya M."/>
            <person name="Sasaki A."/>
            <person name="Kaku H."/>
        </authorList>
    </citation>
    <scope>NUCLEOTIDE SEQUENCE [LARGE SCALE GENOMIC DNA]</scope>
    <source>
        <strain>MAFF 311018</strain>
    </source>
</reference>